<organism>
    <name type="scientific">Xenopus laevis</name>
    <name type="common">African clawed frog</name>
    <dbReference type="NCBI Taxonomy" id="8355"/>
    <lineage>
        <taxon>Eukaryota</taxon>
        <taxon>Metazoa</taxon>
        <taxon>Chordata</taxon>
        <taxon>Craniata</taxon>
        <taxon>Vertebrata</taxon>
        <taxon>Euteleostomi</taxon>
        <taxon>Amphibia</taxon>
        <taxon>Batrachia</taxon>
        <taxon>Anura</taxon>
        <taxon>Pipoidea</taxon>
        <taxon>Pipidae</taxon>
        <taxon>Xenopodinae</taxon>
        <taxon>Xenopus</taxon>
        <taxon>Xenopus</taxon>
    </lineage>
</organism>
<comment type="function">
    <text evidence="1">Probable disulfide isomerase, which participates in the folding of proteins containing disulfide bonds. May act as a dithiol oxidase. Acts as a regulator of endoplasmic reticulum-mitochondria contact sites via its ability to regulate redox signals.</text>
</comment>
<comment type="catalytic activity">
    <reaction evidence="1">
        <text>Catalyzes the rearrangement of -S-S- bonds in proteins.</text>
        <dbReference type="EC" id="5.3.4.1"/>
    </reaction>
</comment>
<comment type="subcellular location">
    <subcellularLocation>
        <location evidence="1">Endoplasmic reticulum membrane</location>
        <topology evidence="1">Single-pass membrane protein</topology>
    </subcellularLocation>
</comment>
<comment type="domain">
    <text evidence="3">The di-lysine motif confers endoplasmic reticulum localization for type I membrane proteins.</text>
</comment>
<comment type="similarity">
    <text evidence="7">Belongs to the protein disulfide isomerase family.</text>
</comment>
<keyword id="KW-1015">Disulfide bond</keyword>
<keyword id="KW-0256">Endoplasmic reticulum</keyword>
<keyword id="KW-0325">Glycoprotein</keyword>
<keyword id="KW-0413">Isomerase</keyword>
<keyword id="KW-0472">Membrane</keyword>
<keyword id="KW-0676">Redox-active center</keyword>
<keyword id="KW-1185">Reference proteome</keyword>
<keyword id="KW-0732">Signal</keyword>
<keyword id="KW-0812">Transmembrane</keyword>
<keyword id="KW-1133">Transmembrane helix</keyword>
<accession>Q6GNG3</accession>
<sequence>MAAAGLCFILAIVSSTSLLASVPVSALVEDLDDSFKENRKDDIWLVDFYAPWCGHCKKLEPVWNEVGIEIRTSGSPIRVGKIDATVYSSIASEFGVRGFPTIKALKGDMAYNYRGPRTKEDIVEFANRVAGPLIRPLPSQQMFDHVKKRHPVLFVYVGVESTLKEKFIEVASELIVYTYFFSASEDVLPKYVTLNEVPAVLVFKDSTYFVYDEYEDGDLSSWVNKERFEGYLHIDGFTLYELGDTGKLVAVAVIDEKNNSIEHTRIKSIAQDVAKNNRNNFHRDFQFGHMDGNDYINSLLMDELSIPTFVVLNTSNQQYFLPSKHIENPEEMIQFINSILDGTAEAQGGDGILQRIKRVFYDAKSTVVSVFKSSPLLGCFLFGLPLGVISIMCYGICTADTEDGSEEMTRKDVIDQNASDEGSDEEEEKGREITDVSDEDQQEKDFMEKKID</sequence>
<protein>
    <recommendedName>
        <fullName>Protein disulfide-isomerase TMX3</fullName>
        <ecNumber evidence="1">5.3.4.1</ecNumber>
    </recommendedName>
    <alternativeName>
        <fullName>Thioredoxin domain-containing protein 10</fullName>
    </alternativeName>
    <alternativeName>
        <fullName>Thioredoxin-related transmembrane protein 3</fullName>
    </alternativeName>
</protein>
<reference key="1">
    <citation type="submission" date="2004-06" db="EMBL/GenBank/DDBJ databases">
        <authorList>
            <consortium name="NIH - Xenopus Gene Collection (XGC) project"/>
        </authorList>
    </citation>
    <scope>NUCLEOTIDE SEQUENCE [LARGE SCALE MRNA]</scope>
    <source>
        <tissue>Spleen</tissue>
    </source>
</reference>
<feature type="signal peptide" evidence="4">
    <location>
        <begin position="1"/>
        <end position="26"/>
    </location>
</feature>
<feature type="chain" id="PRO_0000034188" description="Protein disulfide-isomerase TMX3">
    <location>
        <begin position="27"/>
        <end position="452"/>
    </location>
</feature>
<feature type="topological domain" description="Lumenal" evidence="4">
    <location>
        <begin position="27"/>
        <end position="375"/>
    </location>
</feature>
<feature type="transmembrane region" description="Helical" evidence="4">
    <location>
        <begin position="376"/>
        <end position="396"/>
    </location>
</feature>
<feature type="topological domain" description="Cytoplasmic" evidence="4">
    <location>
        <begin position="397"/>
        <end position="452"/>
    </location>
</feature>
<feature type="domain" description="Thioredoxin" evidence="5">
    <location>
        <begin position="27"/>
        <end position="128"/>
    </location>
</feature>
<feature type="region of interest" description="Disordered" evidence="6">
    <location>
        <begin position="405"/>
        <end position="452"/>
    </location>
</feature>
<feature type="short sequence motif" description="Di-lysine motif" evidence="4">
    <location>
        <begin position="449"/>
        <end position="452"/>
    </location>
</feature>
<feature type="compositionally biased region" description="Basic and acidic residues" evidence="6">
    <location>
        <begin position="443"/>
        <end position="452"/>
    </location>
</feature>
<feature type="active site" description="Nucleophile" evidence="2">
    <location>
        <position position="53"/>
    </location>
</feature>
<feature type="active site" description="Nucleophile" evidence="2">
    <location>
        <position position="56"/>
    </location>
</feature>
<feature type="glycosylation site" description="N-linked (GlcNAc...) asparagine" evidence="4">
    <location>
        <position position="258"/>
    </location>
</feature>
<feature type="glycosylation site" description="N-linked (GlcNAc...) asparagine" evidence="4">
    <location>
        <position position="313"/>
    </location>
</feature>
<feature type="disulfide bond" description="Redox-active" evidence="5">
    <location>
        <begin position="53"/>
        <end position="56"/>
    </location>
</feature>
<dbReference type="EC" id="5.3.4.1" evidence="1"/>
<dbReference type="EMBL" id="BC073549">
    <property type="protein sequence ID" value="AAH73549.1"/>
    <property type="molecule type" value="mRNA"/>
</dbReference>
<dbReference type="RefSeq" id="NP_001085926.1">
    <property type="nucleotide sequence ID" value="NM_001092457.1"/>
</dbReference>
<dbReference type="SMR" id="Q6GNG3"/>
<dbReference type="GlyCosmos" id="Q6GNG3">
    <property type="glycosylation" value="2 sites, No reported glycans"/>
</dbReference>
<dbReference type="DNASU" id="444355"/>
<dbReference type="GeneID" id="444355"/>
<dbReference type="KEGG" id="xla:444355"/>
<dbReference type="AGR" id="Xenbase:XB-GENE-946771"/>
<dbReference type="CTD" id="444355"/>
<dbReference type="Xenbase" id="XB-GENE-946771">
    <property type="gene designation" value="tmx3.S"/>
</dbReference>
<dbReference type="OrthoDB" id="74910at2759"/>
<dbReference type="Proteomes" id="UP000186698">
    <property type="component" value="Chromosome 6S"/>
</dbReference>
<dbReference type="Bgee" id="444355">
    <property type="expression patterns" value="Expressed in egg cell and 19 other cell types or tissues"/>
</dbReference>
<dbReference type="GO" id="GO:0009986">
    <property type="term" value="C:cell surface"/>
    <property type="evidence" value="ECO:0000318"/>
    <property type="project" value="GO_Central"/>
</dbReference>
<dbReference type="GO" id="GO:0005783">
    <property type="term" value="C:endoplasmic reticulum"/>
    <property type="evidence" value="ECO:0000318"/>
    <property type="project" value="GO_Central"/>
</dbReference>
<dbReference type="GO" id="GO:0005789">
    <property type="term" value="C:endoplasmic reticulum membrane"/>
    <property type="evidence" value="ECO:0007669"/>
    <property type="project" value="UniProtKB-SubCell"/>
</dbReference>
<dbReference type="GO" id="GO:0003756">
    <property type="term" value="F:protein disulfide isomerase activity"/>
    <property type="evidence" value="ECO:0007669"/>
    <property type="project" value="UniProtKB-EC"/>
</dbReference>
<dbReference type="CDD" id="cd03000">
    <property type="entry name" value="PDI_a_TMX3"/>
    <property type="match status" value="1"/>
</dbReference>
<dbReference type="FunFam" id="3.40.30.10:FF:000115">
    <property type="entry name" value="protein disulfide-isomerase TMX3 isoform X1"/>
    <property type="match status" value="1"/>
</dbReference>
<dbReference type="FunFam" id="3.40.30.10:FF:000121">
    <property type="entry name" value="protein disulfide-isomerase TMX3 isoform X1"/>
    <property type="match status" value="1"/>
</dbReference>
<dbReference type="Gene3D" id="3.40.30.10">
    <property type="entry name" value="Glutaredoxin"/>
    <property type="match status" value="2"/>
</dbReference>
<dbReference type="InterPro" id="IPR052250">
    <property type="entry name" value="PDI_TMX3"/>
</dbReference>
<dbReference type="InterPro" id="IPR036249">
    <property type="entry name" value="Thioredoxin-like_sf"/>
</dbReference>
<dbReference type="InterPro" id="IPR017937">
    <property type="entry name" value="Thioredoxin_CS"/>
</dbReference>
<dbReference type="InterPro" id="IPR013766">
    <property type="entry name" value="Thioredoxin_domain"/>
</dbReference>
<dbReference type="PANTHER" id="PTHR46426">
    <property type="entry name" value="PROTEIN DISULFIDE-ISOMERASE TMX3"/>
    <property type="match status" value="1"/>
</dbReference>
<dbReference type="PANTHER" id="PTHR46426:SF1">
    <property type="entry name" value="PROTEIN DISULFIDE-ISOMERASE TMX3"/>
    <property type="match status" value="1"/>
</dbReference>
<dbReference type="Pfam" id="PF00085">
    <property type="entry name" value="Thioredoxin"/>
    <property type="match status" value="1"/>
</dbReference>
<dbReference type="Pfam" id="PF13848">
    <property type="entry name" value="Thioredoxin_6"/>
    <property type="match status" value="1"/>
</dbReference>
<dbReference type="PRINTS" id="PR00421">
    <property type="entry name" value="THIOREDOXIN"/>
</dbReference>
<dbReference type="SUPFAM" id="SSF52833">
    <property type="entry name" value="Thioredoxin-like"/>
    <property type="match status" value="2"/>
</dbReference>
<dbReference type="PROSITE" id="PS00194">
    <property type="entry name" value="THIOREDOXIN_1"/>
    <property type="match status" value="1"/>
</dbReference>
<dbReference type="PROSITE" id="PS51352">
    <property type="entry name" value="THIOREDOXIN_2"/>
    <property type="match status" value="1"/>
</dbReference>
<gene>
    <name type="primary">tmx3</name>
    <name type="synonym">txndc10</name>
</gene>
<name>TMX3_XENLA</name>
<evidence type="ECO:0000250" key="1">
    <source>
        <dbReference type="UniProtKB" id="Q96JJ7"/>
    </source>
</evidence>
<evidence type="ECO:0000250" key="2">
    <source>
        <dbReference type="UniProtKB" id="Q9H3N1"/>
    </source>
</evidence>
<evidence type="ECO:0000250" key="3">
    <source>
        <dbReference type="UniProtKB" id="Q9Y320"/>
    </source>
</evidence>
<evidence type="ECO:0000255" key="4"/>
<evidence type="ECO:0000255" key="5">
    <source>
        <dbReference type="PROSITE-ProRule" id="PRU00691"/>
    </source>
</evidence>
<evidence type="ECO:0000256" key="6">
    <source>
        <dbReference type="SAM" id="MobiDB-lite"/>
    </source>
</evidence>
<evidence type="ECO:0000305" key="7"/>
<proteinExistence type="evidence at transcript level"/>